<comment type="function">
    <text evidence="1">Endoribonuclease that initiates mRNA decay.</text>
</comment>
<comment type="similarity">
    <text evidence="1">Belongs to the RNase Y family.</text>
</comment>
<protein>
    <recommendedName>
        <fullName evidence="1">Ribonuclease Y</fullName>
        <shortName evidence="1">RNase Y</shortName>
        <ecNumber evidence="1">3.1.-.-</ecNumber>
    </recommendedName>
</protein>
<feature type="chain" id="PRO_0000344907" description="Ribonuclease Y">
    <location>
        <begin position="1"/>
        <end position="504"/>
    </location>
</feature>
<feature type="domain" description="KH" evidence="1">
    <location>
        <begin position="194"/>
        <end position="279"/>
    </location>
</feature>
<feature type="domain" description="HD" evidence="2">
    <location>
        <begin position="320"/>
        <end position="413"/>
    </location>
</feature>
<reference key="1">
    <citation type="journal article" date="2008" name="Environ. Microbiol.">
        <title>The complete genome sequence of Moorella thermoacetica (f. Clostridium thermoaceticum).</title>
        <authorList>
            <person name="Pierce E."/>
            <person name="Xie G."/>
            <person name="Barabote R.D."/>
            <person name="Saunders E."/>
            <person name="Han C.S."/>
            <person name="Detter J.C."/>
            <person name="Richardson P."/>
            <person name="Brettin T.S."/>
            <person name="Das A."/>
            <person name="Ljungdahl L.G."/>
            <person name="Ragsdale S.W."/>
        </authorList>
    </citation>
    <scope>NUCLEOTIDE SEQUENCE [LARGE SCALE GENOMIC DNA]</scope>
    <source>
        <strain>ATCC 39073 / JCM 9320</strain>
    </source>
</reference>
<gene>
    <name evidence="1" type="primary">rny</name>
    <name type="ordered locus">Moth_1081</name>
</gene>
<evidence type="ECO:0000255" key="1">
    <source>
        <dbReference type="HAMAP-Rule" id="MF_00335"/>
    </source>
</evidence>
<evidence type="ECO:0000255" key="2">
    <source>
        <dbReference type="PROSITE-ProRule" id="PRU01175"/>
    </source>
</evidence>
<dbReference type="EC" id="3.1.-.-" evidence="1"/>
<dbReference type="EMBL" id="CP000232">
    <property type="protein sequence ID" value="ABC19395.1"/>
    <property type="molecule type" value="Genomic_DNA"/>
</dbReference>
<dbReference type="RefSeq" id="YP_429938.1">
    <property type="nucleotide sequence ID" value="NC_007644.1"/>
</dbReference>
<dbReference type="SMR" id="Q2RJJ4"/>
<dbReference type="STRING" id="264732.Moth_1081"/>
<dbReference type="EnsemblBacteria" id="ABC19395">
    <property type="protein sequence ID" value="ABC19395"/>
    <property type="gene ID" value="Moth_1081"/>
</dbReference>
<dbReference type="KEGG" id="mta:Moth_1081"/>
<dbReference type="PATRIC" id="fig|264732.11.peg.1162"/>
<dbReference type="eggNOG" id="COG1418">
    <property type="taxonomic scope" value="Bacteria"/>
</dbReference>
<dbReference type="HOGENOM" id="CLU_028328_1_0_9"/>
<dbReference type="OrthoDB" id="9803205at2"/>
<dbReference type="GO" id="GO:0005886">
    <property type="term" value="C:plasma membrane"/>
    <property type="evidence" value="ECO:0007669"/>
    <property type="project" value="UniProtKB-UniRule"/>
</dbReference>
<dbReference type="GO" id="GO:0003723">
    <property type="term" value="F:RNA binding"/>
    <property type="evidence" value="ECO:0007669"/>
    <property type="project" value="UniProtKB-UniRule"/>
</dbReference>
<dbReference type="GO" id="GO:0004521">
    <property type="term" value="F:RNA endonuclease activity"/>
    <property type="evidence" value="ECO:0007669"/>
    <property type="project" value="UniProtKB-UniRule"/>
</dbReference>
<dbReference type="GO" id="GO:0006402">
    <property type="term" value="P:mRNA catabolic process"/>
    <property type="evidence" value="ECO:0007669"/>
    <property type="project" value="UniProtKB-UniRule"/>
</dbReference>
<dbReference type="CDD" id="cd00077">
    <property type="entry name" value="HDc"/>
    <property type="match status" value="1"/>
</dbReference>
<dbReference type="CDD" id="cd22431">
    <property type="entry name" value="KH-I_RNaseY"/>
    <property type="match status" value="1"/>
</dbReference>
<dbReference type="FunFam" id="1.10.3210.10:FF:000003">
    <property type="entry name" value="Ribonuclease Y"/>
    <property type="match status" value="1"/>
</dbReference>
<dbReference type="FunFam" id="3.30.1370.10:FF:000006">
    <property type="entry name" value="Ribonuclease Y"/>
    <property type="match status" value="1"/>
</dbReference>
<dbReference type="Gene3D" id="1.10.3210.10">
    <property type="entry name" value="Hypothetical protein af1432"/>
    <property type="match status" value="1"/>
</dbReference>
<dbReference type="Gene3D" id="3.30.1370.10">
    <property type="entry name" value="K Homology domain, type 1"/>
    <property type="match status" value="1"/>
</dbReference>
<dbReference type="HAMAP" id="MF_00335">
    <property type="entry name" value="RNase_Y"/>
    <property type="match status" value="1"/>
</dbReference>
<dbReference type="InterPro" id="IPR003607">
    <property type="entry name" value="HD/PDEase_dom"/>
</dbReference>
<dbReference type="InterPro" id="IPR006674">
    <property type="entry name" value="HD_domain"/>
</dbReference>
<dbReference type="InterPro" id="IPR006675">
    <property type="entry name" value="HDIG_dom"/>
</dbReference>
<dbReference type="InterPro" id="IPR004087">
    <property type="entry name" value="KH_dom"/>
</dbReference>
<dbReference type="InterPro" id="IPR004088">
    <property type="entry name" value="KH_dom_type_1"/>
</dbReference>
<dbReference type="InterPro" id="IPR036612">
    <property type="entry name" value="KH_dom_type_1_sf"/>
</dbReference>
<dbReference type="InterPro" id="IPR017705">
    <property type="entry name" value="Ribonuclease_Y"/>
</dbReference>
<dbReference type="InterPro" id="IPR022711">
    <property type="entry name" value="RNase_Y_N"/>
</dbReference>
<dbReference type="NCBIfam" id="TIGR00277">
    <property type="entry name" value="HDIG"/>
    <property type="match status" value="1"/>
</dbReference>
<dbReference type="NCBIfam" id="TIGR03319">
    <property type="entry name" value="RNase_Y"/>
    <property type="match status" value="1"/>
</dbReference>
<dbReference type="PANTHER" id="PTHR12826">
    <property type="entry name" value="RIBONUCLEASE Y"/>
    <property type="match status" value="1"/>
</dbReference>
<dbReference type="PANTHER" id="PTHR12826:SF15">
    <property type="entry name" value="RIBONUCLEASE Y"/>
    <property type="match status" value="1"/>
</dbReference>
<dbReference type="Pfam" id="PF01966">
    <property type="entry name" value="HD"/>
    <property type="match status" value="1"/>
</dbReference>
<dbReference type="Pfam" id="PF00013">
    <property type="entry name" value="KH_1"/>
    <property type="match status" value="1"/>
</dbReference>
<dbReference type="Pfam" id="PF12072">
    <property type="entry name" value="RNase_Y_N"/>
    <property type="match status" value="1"/>
</dbReference>
<dbReference type="SMART" id="SM00471">
    <property type="entry name" value="HDc"/>
    <property type="match status" value="1"/>
</dbReference>
<dbReference type="SMART" id="SM00322">
    <property type="entry name" value="KH"/>
    <property type="match status" value="1"/>
</dbReference>
<dbReference type="SUPFAM" id="SSF54791">
    <property type="entry name" value="Eukaryotic type KH-domain (KH-domain type I)"/>
    <property type="match status" value="1"/>
</dbReference>
<dbReference type="SUPFAM" id="SSF109604">
    <property type="entry name" value="HD-domain/PDEase-like"/>
    <property type="match status" value="1"/>
</dbReference>
<dbReference type="PROSITE" id="PS51831">
    <property type="entry name" value="HD"/>
    <property type="match status" value="1"/>
</dbReference>
<dbReference type="PROSITE" id="PS50084">
    <property type="entry name" value="KH_TYPE_1"/>
    <property type="match status" value="1"/>
</dbReference>
<accession>Q2RJJ4</accession>
<keyword id="KW-0255">Endonuclease</keyword>
<keyword id="KW-0378">Hydrolase</keyword>
<keyword id="KW-0540">Nuclease</keyword>
<keyword id="KW-0694">RNA-binding</keyword>
<name>RNY_MOOTA</name>
<proteinExistence type="inferred from homology"/>
<sequence>MLIAFLVGGAGGYAIRKYLAEAKIASAEKAAATIIEEAKKEAEARKREAVLEAKDEVHRMRNEVERESRERRNELQRLERRLLQKEETLERKSETLERKEASLHRQEEAIQRTREEVEKIRQQQVSELERISGLTTEAARNILLKNVEEEIRHETAMLIKQVEAEAKEEAEKRAREIITYAIQHCAADYVAEATVSVVNLPNDEMKGRIIGREGRNIRALETLTGVDLIIDDTPEAVILSCFDPIRREIARIALEKLIADGRIHPARIEEMVEKARRELDTKIREEGEQATFEVGIHGLHPELVRLLGKLKYRTSYGQNVLKHSLEVAFLAGAMAAELGVDVLVAKRAGLLHDIGKAVDFEVEGPHVNLGVELAKKYRESPEVIHAIEAHHGDVEPKSIEAGLVQAADAISAARPGARRETLEAYIKRLEKLEEIANSFSGVEKSYAIQAGREVRILVKPDKIDDAMAVRLARDIVKTIEQTMEYPGQIKVVVIRETRAVDYAK</sequence>
<organism>
    <name type="scientific">Moorella thermoacetica (strain ATCC 39073 / JCM 9320)</name>
    <dbReference type="NCBI Taxonomy" id="264732"/>
    <lineage>
        <taxon>Bacteria</taxon>
        <taxon>Bacillati</taxon>
        <taxon>Bacillota</taxon>
        <taxon>Clostridia</taxon>
        <taxon>Moorellales</taxon>
        <taxon>Moorellaceae</taxon>
        <taxon>Moorella</taxon>
    </lineage>
</organism>